<feature type="chain" id="PRO_1000045455" description="High frequency lysogenization protein HflD homolog">
    <location>
        <begin position="1"/>
        <end position="208"/>
    </location>
</feature>
<name>HFLD_YERE8</name>
<keyword id="KW-0997">Cell inner membrane</keyword>
<keyword id="KW-1003">Cell membrane</keyword>
<keyword id="KW-0963">Cytoplasm</keyword>
<keyword id="KW-0472">Membrane</keyword>
<organism>
    <name type="scientific">Yersinia enterocolitica serotype O:8 / biotype 1B (strain NCTC 13174 / 8081)</name>
    <dbReference type="NCBI Taxonomy" id="393305"/>
    <lineage>
        <taxon>Bacteria</taxon>
        <taxon>Pseudomonadati</taxon>
        <taxon>Pseudomonadota</taxon>
        <taxon>Gammaproteobacteria</taxon>
        <taxon>Enterobacterales</taxon>
        <taxon>Yersiniaceae</taxon>
        <taxon>Yersinia</taxon>
    </lineage>
</organism>
<sequence length="208" mass="22664">MAKNYYDITLALAGICQSARLVQQLAHEGQCDNDALNTVLSGLLQTNPPSTLAVYGGNEQSLKMGLETLQSVLNANRQGPAAELTRYTLSLMVLERKLNANKSAMNTLGDRISQLDRQLAHFDLESETMMSSLAAIYTDVISPLGPRIQVIGSPAILQSTLVQAKIRATLLAGIRSAVLWQQVGGSRLQLMFSRNRLFKQAQSILAHI</sequence>
<gene>
    <name evidence="1" type="primary">hflD</name>
    <name type="ordered locus">YE1721</name>
</gene>
<proteinExistence type="inferred from homology"/>
<accession>A1JLJ4</accession>
<comment type="subcellular location">
    <subcellularLocation>
        <location>Cytoplasm</location>
    </subcellularLocation>
    <subcellularLocation>
        <location evidence="1">Cell inner membrane</location>
        <topology evidence="1">Peripheral membrane protein</topology>
        <orientation evidence="1">Cytoplasmic side</orientation>
    </subcellularLocation>
</comment>
<comment type="similarity">
    <text evidence="1">Belongs to the HflD family.</text>
</comment>
<dbReference type="EMBL" id="AM286415">
    <property type="protein sequence ID" value="CAL11796.1"/>
    <property type="molecule type" value="Genomic_DNA"/>
</dbReference>
<dbReference type="RefSeq" id="WP_005170635.1">
    <property type="nucleotide sequence ID" value="NC_008800.1"/>
</dbReference>
<dbReference type="RefSeq" id="YP_001006007.1">
    <property type="nucleotide sequence ID" value="NC_008800.1"/>
</dbReference>
<dbReference type="SMR" id="A1JLJ4"/>
<dbReference type="GeneID" id="93969229"/>
<dbReference type="KEGG" id="yen:YE1721"/>
<dbReference type="PATRIC" id="fig|393305.7.peg.1867"/>
<dbReference type="eggNOG" id="COG2915">
    <property type="taxonomic scope" value="Bacteria"/>
</dbReference>
<dbReference type="HOGENOM" id="CLU_098920_0_0_6"/>
<dbReference type="OrthoDB" id="9788031at2"/>
<dbReference type="Proteomes" id="UP000000642">
    <property type="component" value="Chromosome"/>
</dbReference>
<dbReference type="GO" id="GO:0005737">
    <property type="term" value="C:cytoplasm"/>
    <property type="evidence" value="ECO:0007669"/>
    <property type="project" value="UniProtKB-SubCell"/>
</dbReference>
<dbReference type="GO" id="GO:0005886">
    <property type="term" value="C:plasma membrane"/>
    <property type="evidence" value="ECO:0007669"/>
    <property type="project" value="UniProtKB-SubCell"/>
</dbReference>
<dbReference type="FunFam" id="1.10.3890.10:FF:000001">
    <property type="entry name" value="High frequency lysogenization protein HflD homolog"/>
    <property type="match status" value="1"/>
</dbReference>
<dbReference type="Gene3D" id="1.10.3890.10">
    <property type="entry name" value="HflD-like"/>
    <property type="match status" value="1"/>
</dbReference>
<dbReference type="HAMAP" id="MF_00695">
    <property type="entry name" value="HflD_protein"/>
    <property type="match status" value="1"/>
</dbReference>
<dbReference type="InterPro" id="IPR007451">
    <property type="entry name" value="HflD"/>
</dbReference>
<dbReference type="InterPro" id="IPR035932">
    <property type="entry name" value="HflD-like_sf"/>
</dbReference>
<dbReference type="NCBIfam" id="NF001246">
    <property type="entry name" value="PRK00218.1-2"/>
    <property type="match status" value="1"/>
</dbReference>
<dbReference type="NCBIfam" id="NF001248">
    <property type="entry name" value="PRK00218.1-4"/>
    <property type="match status" value="1"/>
</dbReference>
<dbReference type="NCBIfam" id="NF001249">
    <property type="entry name" value="PRK00218.1-5"/>
    <property type="match status" value="1"/>
</dbReference>
<dbReference type="PANTHER" id="PTHR38100">
    <property type="entry name" value="HIGH FREQUENCY LYSOGENIZATION PROTEIN HFLD"/>
    <property type="match status" value="1"/>
</dbReference>
<dbReference type="PANTHER" id="PTHR38100:SF1">
    <property type="entry name" value="HIGH FREQUENCY LYSOGENIZATION PROTEIN HFLD"/>
    <property type="match status" value="1"/>
</dbReference>
<dbReference type="Pfam" id="PF04356">
    <property type="entry name" value="DUF489"/>
    <property type="match status" value="1"/>
</dbReference>
<dbReference type="SUPFAM" id="SSF101322">
    <property type="entry name" value="YcfC-like"/>
    <property type="match status" value="1"/>
</dbReference>
<reference key="1">
    <citation type="journal article" date="2006" name="PLoS Genet.">
        <title>The complete genome sequence and comparative genome analysis of the high pathogenicity Yersinia enterocolitica strain 8081.</title>
        <authorList>
            <person name="Thomson N.R."/>
            <person name="Howard S."/>
            <person name="Wren B.W."/>
            <person name="Holden M.T.G."/>
            <person name="Crossman L."/>
            <person name="Challis G.L."/>
            <person name="Churcher C."/>
            <person name="Mungall K."/>
            <person name="Brooks K."/>
            <person name="Chillingworth T."/>
            <person name="Feltwell T."/>
            <person name="Abdellah Z."/>
            <person name="Hauser H."/>
            <person name="Jagels K."/>
            <person name="Maddison M."/>
            <person name="Moule S."/>
            <person name="Sanders M."/>
            <person name="Whitehead S."/>
            <person name="Quail M.A."/>
            <person name="Dougan G."/>
            <person name="Parkhill J."/>
            <person name="Prentice M.B."/>
        </authorList>
    </citation>
    <scope>NUCLEOTIDE SEQUENCE [LARGE SCALE GENOMIC DNA]</scope>
    <source>
        <strain>NCTC 13174 / 8081</strain>
    </source>
</reference>
<protein>
    <recommendedName>
        <fullName evidence="1">High frequency lysogenization protein HflD homolog</fullName>
    </recommendedName>
</protein>
<evidence type="ECO:0000255" key="1">
    <source>
        <dbReference type="HAMAP-Rule" id="MF_00695"/>
    </source>
</evidence>